<evidence type="ECO:0000255" key="1">
    <source>
        <dbReference type="HAMAP-Rule" id="MF_00582"/>
    </source>
</evidence>
<comment type="similarity">
    <text evidence="1">Belongs to the UPF0215 family.</text>
</comment>
<gene>
    <name type="ordered locus">Pcal_0119</name>
</gene>
<dbReference type="EMBL" id="CP000561">
    <property type="protein sequence ID" value="ABO07557.1"/>
    <property type="molecule type" value="Genomic_DNA"/>
</dbReference>
<dbReference type="RefSeq" id="WP_011848814.1">
    <property type="nucleotide sequence ID" value="NC_009073.1"/>
</dbReference>
<dbReference type="SMR" id="A3MSE0"/>
<dbReference type="STRING" id="410359.Pcal_0119"/>
<dbReference type="GeneID" id="4909633"/>
<dbReference type="KEGG" id="pcl:Pcal_0119"/>
<dbReference type="eggNOG" id="arCOG00928">
    <property type="taxonomic scope" value="Archaea"/>
</dbReference>
<dbReference type="HOGENOM" id="CLU_095956_0_0_2"/>
<dbReference type="OrthoDB" id="15207at2157"/>
<dbReference type="Proteomes" id="UP000001431">
    <property type="component" value="Chromosome"/>
</dbReference>
<dbReference type="Gene3D" id="3.30.2170.10">
    <property type="entry name" value="archaeoglobus fulgidus dsm 4304 superfamily"/>
    <property type="match status" value="1"/>
</dbReference>
<dbReference type="HAMAP" id="MF_00582">
    <property type="entry name" value="UPF0215"/>
    <property type="match status" value="1"/>
</dbReference>
<dbReference type="InterPro" id="IPR002802">
    <property type="entry name" value="Endo_dU"/>
</dbReference>
<dbReference type="PANTHER" id="PTHR39518">
    <property type="entry name" value="UPF0215 PROTEIN MJ1150"/>
    <property type="match status" value="1"/>
</dbReference>
<dbReference type="PANTHER" id="PTHR39518:SF2">
    <property type="entry name" value="UPF0215 PROTEIN MJ1150"/>
    <property type="match status" value="1"/>
</dbReference>
<dbReference type="Pfam" id="PF01949">
    <property type="entry name" value="DUF99"/>
    <property type="match status" value="1"/>
</dbReference>
<dbReference type="PIRSF" id="PIRSF006380">
    <property type="entry name" value="UCP006380"/>
    <property type="match status" value="1"/>
</dbReference>
<feature type="chain" id="PRO_1000197956" description="UPF0215 protein Pcal_0119">
    <location>
        <begin position="1"/>
        <end position="182"/>
    </location>
</feature>
<accession>A3MSE0</accession>
<reference key="1">
    <citation type="submission" date="2007-02" db="EMBL/GenBank/DDBJ databases">
        <title>Complete sequence of Pyrobaculum calidifontis JCM 11548.</title>
        <authorList>
            <consortium name="US DOE Joint Genome Institute"/>
            <person name="Copeland A."/>
            <person name="Lucas S."/>
            <person name="Lapidus A."/>
            <person name="Barry K."/>
            <person name="Glavina del Rio T."/>
            <person name="Dalin E."/>
            <person name="Tice H."/>
            <person name="Pitluck S."/>
            <person name="Chain P."/>
            <person name="Malfatti S."/>
            <person name="Shin M."/>
            <person name="Vergez L."/>
            <person name="Schmutz J."/>
            <person name="Larimer F."/>
            <person name="Land M."/>
            <person name="Hauser L."/>
            <person name="Kyrpides N."/>
            <person name="Mikhailova N."/>
            <person name="Cozen A.E."/>
            <person name="Fitz-Gibbon S.T."/>
            <person name="House C.H."/>
            <person name="Saltikov C."/>
            <person name="Lowe T.M."/>
            <person name="Richardson P."/>
        </authorList>
    </citation>
    <scope>NUCLEOTIDE SEQUENCE [LARGE SCALE GENOMIC DNA]</scope>
    <source>
        <strain>DSM 21063 / JCM 11548 / VA1</strain>
    </source>
</reference>
<organism>
    <name type="scientific">Pyrobaculum calidifontis (strain DSM 21063 / JCM 11548 / VA1)</name>
    <dbReference type="NCBI Taxonomy" id="410359"/>
    <lineage>
        <taxon>Archaea</taxon>
        <taxon>Thermoproteota</taxon>
        <taxon>Thermoprotei</taxon>
        <taxon>Thermoproteales</taxon>
        <taxon>Thermoproteaceae</taxon>
        <taxon>Pyrobaculum</taxon>
    </lineage>
</organism>
<proteinExistence type="inferred from homology"/>
<protein>
    <recommendedName>
        <fullName evidence="1">UPF0215 protein Pcal_0119</fullName>
    </recommendedName>
</protein>
<sequence length="182" mass="20293">MAIAESFKVEDGFSVLAGVVARRDGTVEAVAVDTATVGGTDATEAAVRIAERLLKPDVSIIMLDGCVVSFYNWIDGEALWRRFGVPVACYVFEDPEGRVEEAVKKLFKDWELRIEAIRRLGWPTPYYTKSGYKIYIRSWGIDPADAGRAAELCAKFGKWPEPIRVAQLVASGVREYLSRRSR</sequence>
<name>Y119_PYRCJ</name>